<sequence length="15" mass="1632">XLEGAFVLNQSQDAE</sequence>
<organism>
    <name type="scientific">Zea mays</name>
    <name type="common">Maize</name>
    <dbReference type="NCBI Taxonomy" id="4577"/>
    <lineage>
        <taxon>Eukaryota</taxon>
        <taxon>Viridiplantae</taxon>
        <taxon>Streptophyta</taxon>
        <taxon>Embryophyta</taxon>
        <taxon>Tracheophyta</taxon>
        <taxon>Spermatophyta</taxon>
        <taxon>Magnoliopsida</taxon>
        <taxon>Liliopsida</taxon>
        <taxon>Poales</taxon>
        <taxon>Poaceae</taxon>
        <taxon>PACMAD clade</taxon>
        <taxon>Panicoideae</taxon>
        <taxon>Andropogonodae</taxon>
        <taxon>Andropogoneae</taxon>
        <taxon>Tripsacinae</taxon>
        <taxon>Zea</taxon>
    </lineage>
</organism>
<feature type="chain" id="PRO_0000055524" description="Unknown protein from spot 984 of 2D-PAGE of etiolated coleoptile">
    <location>
        <begin position="1" status="less than"/>
        <end position="15" status="greater than"/>
    </location>
</feature>
<feature type="non-terminal residue">
    <location>
        <position position="1"/>
    </location>
</feature>
<feature type="non-terminal residue">
    <location>
        <position position="15"/>
    </location>
</feature>
<proteinExistence type="evidence at protein level"/>
<protein>
    <recommendedName>
        <fullName>Unknown protein from spot 984 of 2D-PAGE of etiolated coleoptile</fullName>
    </recommendedName>
</protein>
<keyword id="KW-0903">Direct protein sequencing</keyword>
<keyword id="KW-1185">Reference proteome</keyword>
<accession>P80634</accession>
<name>UC28_MAIZE</name>
<reference key="1">
    <citation type="journal article" date="1996" name="Theor. Appl. Genet.">
        <title>The maize two dimensional gel protein database: towards an integrated genome analysis program.</title>
        <authorList>
            <person name="Touzet P."/>
            <person name="Riccardi F."/>
            <person name="Morin C."/>
            <person name="Damerval C."/>
            <person name="Huet J.-C."/>
            <person name="Pernollet J.-C."/>
            <person name="Zivy M."/>
            <person name="de Vienne D."/>
        </authorList>
        <dbReference type="AGRICOLA" id="IND20551642"/>
    </citation>
    <scope>PROTEIN SEQUENCE</scope>
    <source>
        <tissue>Coleoptile</tissue>
    </source>
</reference>
<comment type="miscellaneous">
    <text>On the 2D-gel the determined pI of this unknown protein is: 6.2, its MW is: 27.7 kDa.</text>
</comment>
<dbReference type="MaizeGDB" id="123959"/>
<dbReference type="InParanoid" id="P80634"/>
<dbReference type="Proteomes" id="UP000007305">
    <property type="component" value="Unplaced"/>
</dbReference>